<accession>P0A386</accession>
<accession>P56150</accession>
<accession>Q9ETF4</accession>
<evidence type="ECO:0000255" key="1">
    <source>
        <dbReference type="HAMAP-Rule" id="MF_01378"/>
    </source>
</evidence>
<evidence type="ECO:0000269" key="2">
    <source>
    </source>
</evidence>
<evidence type="ECO:0000269" key="3">
    <source>
    </source>
</evidence>
<evidence type="ECO:0000269" key="4">
    <source>
    </source>
</evidence>
<evidence type="ECO:0000269" key="5">
    <source>
    </source>
</evidence>
<evidence type="ECO:0000269" key="6">
    <source>
    </source>
</evidence>
<evidence type="ECO:0000269" key="7">
    <source>
    </source>
</evidence>
<evidence type="ECO:0000269" key="8">
    <source>
    </source>
</evidence>
<evidence type="ECO:0000269" key="9">
    <source>
    </source>
</evidence>
<evidence type="ECO:0000269" key="10">
    <source>
    </source>
</evidence>
<evidence type="ECO:0000269" key="11">
    <source>
    </source>
</evidence>
<evidence type="ECO:0000269" key="12">
    <source>
    </source>
</evidence>
<evidence type="ECO:0000269" key="13">
    <source>
    </source>
</evidence>
<evidence type="ECO:0000269" key="14">
    <source ref="6"/>
</evidence>
<evidence type="ECO:0000303" key="15">
    <source>
    </source>
</evidence>
<evidence type="ECO:0000303" key="16">
    <source>
    </source>
</evidence>
<evidence type="ECO:0000303" key="17">
    <source>
    </source>
</evidence>
<evidence type="ECO:0000303" key="18">
    <source>
    </source>
</evidence>
<evidence type="ECO:0000303" key="19">
    <source>
    </source>
</evidence>
<evidence type="ECO:0000303" key="20">
    <source ref="6"/>
</evidence>
<evidence type="ECO:0007829" key="21">
    <source>
        <dbReference type="PDB" id="1MZ4"/>
    </source>
</evidence>
<evidence type="ECO:0007829" key="22">
    <source>
        <dbReference type="PDB" id="1W5C"/>
    </source>
</evidence>
<evidence type="ECO:0007829" key="23">
    <source>
        <dbReference type="PDB" id="7YQ2"/>
    </source>
</evidence>
<organism>
    <name type="scientific">Thermosynechococcus vestitus (strain NIES-2133 / IAM M-273 / BP-1)</name>
    <dbReference type="NCBI Taxonomy" id="197221"/>
    <lineage>
        <taxon>Bacteria</taxon>
        <taxon>Bacillati</taxon>
        <taxon>Cyanobacteriota</taxon>
        <taxon>Cyanophyceae</taxon>
        <taxon>Acaryochloridales</taxon>
        <taxon>Thermosynechococcaceae</taxon>
        <taxon>Thermosynechococcus</taxon>
    </lineage>
</organism>
<keyword id="KW-0002">3D-structure</keyword>
<keyword id="KW-0903">Direct protein sequencing</keyword>
<keyword id="KW-0249">Electron transport</keyword>
<keyword id="KW-0349">Heme</keyword>
<keyword id="KW-0408">Iron</keyword>
<keyword id="KW-0472">Membrane</keyword>
<keyword id="KW-0479">Metal-binding</keyword>
<keyword id="KW-0602">Photosynthesis</keyword>
<keyword id="KW-0604">Photosystem II</keyword>
<keyword id="KW-1185">Reference proteome</keyword>
<keyword id="KW-0732">Signal</keyword>
<keyword id="KW-0793">Thylakoid</keyword>
<keyword id="KW-0813">Transport</keyword>
<gene>
    <name evidence="1 15" type="primary">psbV</name>
    <name type="ordered locus">tll1285</name>
</gene>
<name>CY550_THEVB</name>
<reference key="1">
    <citation type="journal article" date="2001" name="Plant Cell Physiol.">
        <title>Functional analysis of psbV and a novel c-type cytochrome gene psbV2 of the thermophilic cyanobacterium Thermosynechococcus elongatus strain BP-1.</title>
        <authorList>
            <person name="Katoh H."/>
            <person name="Itoh S."/>
            <person name="Shen J.-R."/>
            <person name="Ikeuchi M."/>
        </authorList>
    </citation>
    <scope>NUCLEOTIDE SEQUENCE [GENOMIC DNA]</scope>
    <scope>DISRUPTION PHENOTYPE</scope>
</reference>
<reference key="2">
    <citation type="journal article" date="2002" name="DNA Res.">
        <title>Complete genome structure of the thermophilic cyanobacterium Thermosynechococcus elongatus BP-1.</title>
        <authorList>
            <person name="Nakamura Y."/>
            <person name="Kaneko T."/>
            <person name="Sato S."/>
            <person name="Ikeuchi M."/>
            <person name="Katoh H."/>
            <person name="Sasamoto S."/>
            <person name="Watanabe A."/>
            <person name="Iriguchi M."/>
            <person name="Kawashima K."/>
            <person name="Kimura T."/>
            <person name="Kishida Y."/>
            <person name="Kiyokawa C."/>
            <person name="Kohara M."/>
            <person name="Matsumoto M."/>
            <person name="Matsuno A."/>
            <person name="Nakazaki N."/>
            <person name="Shimpo S."/>
            <person name="Sugimoto M."/>
            <person name="Takeuchi C."/>
            <person name="Yamada M."/>
            <person name="Tabata S."/>
        </authorList>
    </citation>
    <scope>NUCLEOTIDE SEQUENCE [LARGE SCALE GENOMIC DNA]</scope>
    <source>
        <strain>NIES-2133 / IAM M-273 / BP-1</strain>
    </source>
</reference>
<reference key="3">
    <citation type="journal article" date="2007" name="Biochim. Biophys. Acta">
        <title>Ycf12 is a core subunit in the photosystem II complex.</title>
        <authorList>
            <person name="Kashino Y."/>
            <person name="Takahashi T."/>
            <person name="Inoue-Kashino N."/>
            <person name="Ban A."/>
            <person name="Ikeda Y."/>
            <person name="Satoh K."/>
            <person name="Sugiura M."/>
        </authorList>
    </citation>
    <scope>PROTEIN SEQUENCE OF 27-33</scope>
    <scope>COFACTOR</scope>
    <scope>SUBCELLULAR LOCATION</scope>
</reference>
<reference key="4">
    <citation type="journal article" date="2003" name="Plant Cell Physiol.">
        <title>Structural and EPR characterization of the soluble form of cytochrome c-550 and of the psbV2 gene product from the cyanobacterium Thermosynechococcus elongatus.</title>
        <authorList>
            <person name="Kerfeld C.A."/>
            <person name="Sawaya M.R."/>
            <person name="Bottin H."/>
            <person name="Tran K.T."/>
            <person name="Sugiura M."/>
            <person name="Cascio D."/>
            <person name="Desbois A."/>
            <person name="Yeates T.O."/>
            <person name="Kirilovsky D."/>
            <person name="Boussac A."/>
        </authorList>
    </citation>
    <scope>X-RAY CRYSTALLOGRAPHY (1.8 ANGSTROMS) OF 27-163</scope>
    <scope>COFACTOR</scope>
    <scope>SUBUNIT</scope>
    <scope>SUBCELLULAR LOCATION</scope>
</reference>
<reference key="5">
    <citation type="journal article" date="2004" name="Science">
        <title>Architecture of the photosynthetic oxygen-evolving center.</title>
        <authorList>
            <person name="Ferreira K.N."/>
            <person name="Iverson T.M."/>
            <person name="Maghlaoui K."/>
            <person name="Barber J."/>
            <person name="Iwata S."/>
        </authorList>
    </citation>
    <scope>X-RAY CRYSTALLOGRAPHY (3.5 ANGSTROMS) OF 27-163 IN PHOTOSYSTEM II WITH HEME</scope>
    <scope>COFACTOR</scope>
    <scope>SUBUNIT</scope>
    <scope>SUBCELLULAR LOCATION</scope>
</reference>
<reference key="6">
    <citation type="journal article" date="2004" name="Phys. Chem. Chem. Phys.">
        <title>Crystal structure of cyanobacterial photosystem II at 3.2 A resolution: a closer look at the Mn-cluster.</title>
        <authorList>
            <person name="Biesiadka J."/>
            <person name="Loll B."/>
            <person name="Kern J."/>
            <person name="Irrgangb K.-D."/>
            <person name="Zouni A."/>
        </authorList>
    </citation>
    <scope>X-RAY CRYSTALLOGRAPHY (3.2 ANGSTROMS) OF 27-163 IN PHOTOSYSTEM II WITH HEME</scope>
    <scope>COFACTOR</scope>
    <scope>SUBUNIT</scope>
    <scope>SUBCELLULAR LOCATION</scope>
</reference>
<reference key="7">
    <citation type="journal article" date="2005" name="Nature">
        <title>Towards complete cofactor arrangement in the 3.0 A resolution structure of photosystem II.</title>
        <authorList>
            <person name="Loll B."/>
            <person name="Kern J."/>
            <person name="Saenger W."/>
            <person name="Zouni A."/>
            <person name="Biesiadka J."/>
        </authorList>
    </citation>
    <scope>X-RAY CRYSTALLOGRAPHY (3.0 ANGSTROMS) OF 27-163 IN PHOTOSYSTEM II WITH HEME</scope>
    <scope>COFACTOR</scope>
    <scope>SUBUNIT</scope>
    <scope>SUBCELLULAR LOCATION</scope>
    <scope>MASS SPECTROMETRY</scope>
    <source>
        <strain>NIES-2133 / IAM M-273 / BP-1</strain>
    </source>
</reference>
<reference key="8">
    <citation type="journal article" date="2009" name="Nat. Struct. Mol. Biol.">
        <title>Cyanobacterial photosystem II at 2.9-A resolution and the role of quinones, lipids, channels and chloride.</title>
        <authorList>
            <person name="Guskov A."/>
            <person name="Kern J."/>
            <person name="Gabdulkhakov A."/>
            <person name="Broser M."/>
            <person name="Zouni A."/>
            <person name="Saenger W."/>
        </authorList>
    </citation>
    <scope>X-RAY CRYSTALLOGRAPHY (2.90 ANGSTROMS) OF 27-163 IN PHOTOSYSTEM II WITH HEME</scope>
    <scope>COFACTOR</scope>
    <scope>SUBUNIT</scope>
    <scope>SUBCELLULAR LOCATION</scope>
    <scope>MASS SPECTROMETRY</scope>
    <source>
        <strain>NIES-2133 / IAM M-273 / BP-1</strain>
    </source>
</reference>
<reference key="9">
    <citation type="journal article" date="2010" name="J. Biol. Chem.">
        <title>Crystal structure of monomeric photosystem II from Thermosynechococcus elongatus at 3.6 A resolution.</title>
        <authorList>
            <person name="Broser M."/>
            <person name="Gabdulkhakov A."/>
            <person name="Kern J."/>
            <person name="Guskov A."/>
            <person name="Muh F."/>
            <person name="Saenger W."/>
            <person name="Zouni A."/>
        </authorList>
    </citation>
    <scope>X-RAY CRYSTALLOGRAPHY (3.60 ANGSTROMS) OF 27-163 IN PHOTOSYSTEM II WITH HEME</scope>
    <scope>FUNCTION</scope>
    <scope>COFACTOR</scope>
    <scope>SUBUNIT</scope>
    <scope>SUBCELLULAR LOCATION</scope>
    <scope>MASS SPECTROMETRY</scope>
    <source>
        <strain>NIES-2133 / IAM M-273 / BP-1</strain>
    </source>
</reference>
<reference key="10">
    <citation type="journal article" date="2011" name="J. Biol. Chem.">
        <title>Structural basis of cyanobacterial photosystem II inhibition by the herbicide terbutryn.</title>
        <authorList>
            <person name="Broser M."/>
            <person name="Glockner C."/>
            <person name="Gabdulkhakov A."/>
            <person name="Guskov A."/>
            <person name="Buchta J."/>
            <person name="Kern J."/>
            <person name="Muh F."/>
            <person name="Dau H."/>
            <person name="Saenger W."/>
            <person name="Zouni A."/>
        </authorList>
    </citation>
    <scope>X-RAY CRYSTALLOGRAPHY (3.20 ANGSTROMS) OF 27-163 IN PHOTOSYSTEM II WITH HEME</scope>
    <scope>FUNCTION</scope>
    <scope>COFACTOR</scope>
    <scope>SUBUNIT</scope>
    <scope>SUBCELLULAR LOCATION</scope>
</reference>
<reference key="11">
    <citation type="journal article" date="2012" name="Proc. Natl. Acad. Sci. U.S.A.">
        <title>Room temperature femtosecond X-ray diffraction of photosystem II microcrystals.</title>
        <authorList>
            <person name="Kern J."/>
            <person name="Alonso-Mori R."/>
            <person name="Hellmich J."/>
            <person name="Tran R."/>
            <person name="Hattne J."/>
            <person name="Laksmono H."/>
            <person name="Glockner C."/>
            <person name="Echols N."/>
            <person name="Sierra R.G."/>
            <person name="Sellberg J."/>
            <person name="Lassalle-Kaiser B."/>
            <person name="Gildea R.J."/>
            <person name="Glatzel P."/>
            <person name="Grosse-Kunstleve R.W."/>
            <person name="Latimer M.J."/>
            <person name="McQueen T.A."/>
            <person name="DiFiore D."/>
            <person name="Fry A.R."/>
            <person name="Messerschmidt M."/>
            <person name="Miahnahri A."/>
            <person name="Schafer D.W."/>
            <person name="Seibert M.M."/>
            <person name="Sokaras D."/>
            <person name="Weng T.C."/>
            <person name="Zwart P.H."/>
            <person name="White W.E."/>
            <person name="Adams P.D."/>
            <person name="Bogan M.J."/>
            <person name="Boutet S."/>
            <person name="Williams G.J."/>
            <person name="Messinger J."/>
            <person name="Sauter N.K."/>
            <person name="Zouni A."/>
            <person name="Bergmann U."/>
            <person name="Yano J."/>
            <person name="Yachandra V.K."/>
        </authorList>
    </citation>
    <scope>X-RAY CRYSTALLOGRAPHY (6.56 ANGSTROMS) OF 27-163 IN PHOTOSYSTEM II</scope>
    <scope>COFACTOR</scope>
    <scope>SUBUNIT</scope>
    <scope>SUBCELLULAR LOCATION</scope>
    <source>
        <strain>NIES-2133 / IAM M-273 / BP-1</strain>
    </source>
</reference>
<reference key="12">
    <citation type="journal article" date="2013" name="Science">
        <title>Simultaneous femtosecond X-ray spectroscopy and diffraction of photosystem II at room temperature.</title>
        <authorList>
            <person name="Kern J."/>
            <person name="Alonso-Mori R."/>
            <person name="Tran R."/>
            <person name="Hattne J."/>
            <person name="Gildea R.J."/>
            <person name="Echols N."/>
            <person name="Glockner C."/>
            <person name="Hellmich J."/>
            <person name="Laksmono H."/>
            <person name="Sierra R.G."/>
            <person name="Lassalle-Kaiser B."/>
            <person name="Koroidov S."/>
            <person name="Lampe A."/>
            <person name="Han G."/>
            <person name="Gul S."/>
            <person name="Difiore D."/>
            <person name="Milathianaki D."/>
            <person name="Fry A.R."/>
            <person name="Miahnahri A."/>
            <person name="Schafer D.W."/>
            <person name="Messerschmidt M."/>
            <person name="Seibert M.M."/>
            <person name="Koglin J.E."/>
            <person name="Sokaras D."/>
            <person name="Weng T.C."/>
            <person name="Sellberg J."/>
            <person name="Latimer M.J."/>
            <person name="Grosse-Kunstleve R.W."/>
            <person name="Zwart P.H."/>
            <person name="White W.E."/>
            <person name="Glatzel P."/>
            <person name="Adams P.D."/>
            <person name="Bogan M.J."/>
            <person name="Williams G.J."/>
            <person name="Boutet S."/>
            <person name="Messinger J."/>
            <person name="Zouni A."/>
            <person name="Sauter N.K."/>
            <person name="Yachandra V.K."/>
            <person name="Bergmann U."/>
            <person name="Yano J."/>
        </authorList>
    </citation>
    <scope>X-RAY CRYSTALLOGRAPHY (5.70 ANGSTROMS) IN PHOTOSYSTEM II</scope>
    <scope>COFACTOR</scope>
    <scope>SUBUNIT</scope>
    <scope>SUBCELLULAR LOCATION</scope>
    <source>
        <strain>NIES-2133 / IAM M-273 / BP-1</strain>
    </source>
</reference>
<reference key="13">
    <citation type="journal article" date="2014" name="Nature">
        <title>Serial time-resolved crystallography of photosystem II using a femtosecond X-ray laser.</title>
        <authorList>
            <person name="Kupitz C."/>
            <person name="Basu S."/>
            <person name="Grotjohann I."/>
            <person name="Fromme R."/>
            <person name="Zatsepin N.A."/>
            <person name="Rendek K.N."/>
            <person name="Hunter M.S."/>
            <person name="Shoeman R.L."/>
            <person name="White T.A."/>
            <person name="Wang D."/>
            <person name="James D."/>
            <person name="Yang J.H."/>
            <person name="Cobb D.E."/>
            <person name="Reeder B."/>
            <person name="Sierra R.G."/>
            <person name="Liu H."/>
            <person name="Barty A."/>
            <person name="Aquila A.L."/>
            <person name="Deponte D."/>
            <person name="Kirian R.A."/>
            <person name="Bari S."/>
            <person name="Bergkamp J.J."/>
            <person name="Beyerlein K.R."/>
            <person name="Bogan M.J."/>
            <person name="Caleman C."/>
            <person name="Chao T.C."/>
            <person name="Conrad C.E."/>
            <person name="Davis K.M."/>
            <person name="Fleckenstein H."/>
            <person name="Galli L."/>
            <person name="Hau-Riege S.P."/>
            <person name="Kassemeyer S."/>
            <person name="Laksmono H."/>
            <person name="Liang M."/>
            <person name="Lomb L."/>
            <person name="Marchesini S."/>
            <person name="Martin A.V."/>
            <person name="Messerschmidt M."/>
            <person name="Milathianaki D."/>
            <person name="Nass K."/>
            <person name="Ros A."/>
            <person name="Roy-Chowdhury S."/>
            <person name="Schmidt K."/>
            <person name="Seibert M."/>
            <person name="Steinbrener J."/>
            <person name="Stellato F."/>
            <person name="Yan L."/>
            <person name="Yoon C."/>
            <person name="Moore T.A."/>
            <person name="Moore A.L."/>
            <person name="Pushkar Y."/>
            <person name="Williams G.J."/>
            <person name="Boutet S."/>
            <person name="Doak R.B."/>
            <person name="Weierstall U."/>
            <person name="Frank M."/>
            <person name="Chapman H.N."/>
            <person name="Spence J.C."/>
            <person name="Fromme P."/>
        </authorList>
    </citation>
    <scope>X-RAY CRYSTALLOGRAPHY (5.00 ANGSTROMS) OF 27-163 IN PHOTOSYSTEM II WITH HEME</scope>
    <scope>COFACTOR</scope>
    <scope>SUBUNIT</scope>
    <scope>SUBCELLULAR LOCATION</scope>
    <source>
        <strain>NIES-2133 / IAM M-273 / BP-1</strain>
    </source>
</reference>
<reference key="14">
    <citation type="journal article" date="2014" name="Nat. Commun.">
        <title>Taking snapshots of photosynthetic water oxidation using femtosecond X-ray diffraction and spectroscopy.</title>
        <authorList>
            <person name="Kern J."/>
            <person name="Tran R."/>
            <person name="Alonso-Mori R."/>
            <person name="Koroidov S."/>
            <person name="Echols N."/>
            <person name="Hattne J."/>
            <person name="Ibrahim M."/>
            <person name="Gul S."/>
            <person name="Laksmono H."/>
            <person name="Sierra R.G."/>
            <person name="Gildea R.J."/>
            <person name="Han G."/>
            <person name="Hellmich J."/>
            <person name="Lassalle-Kaiser B."/>
            <person name="Chatterjee R."/>
            <person name="Brewster A.S."/>
            <person name="Stan C.A."/>
            <person name="Gloeckner C."/>
            <person name="Lampe A."/>
            <person name="DiFiore D."/>
            <person name="Milathianaki D."/>
            <person name="Fry A.R."/>
            <person name="Seibert M.M."/>
            <person name="Koglin J.E."/>
            <person name="Gallo E."/>
            <person name="Uhlig J."/>
            <person name="Sokaras D."/>
            <person name="Weng T.C."/>
            <person name="Zwart P.H."/>
            <person name="Skinner D.E."/>
            <person name="Bogan M.J."/>
            <person name="Messerschmidt M."/>
            <person name="Glatzel P."/>
            <person name="Williams G.J."/>
            <person name="Boutet S."/>
            <person name="Adams P.D."/>
            <person name="Zouni A."/>
            <person name="Messinger J."/>
            <person name="Sauter N.K."/>
            <person name="Bergmann U."/>
            <person name="Yano J."/>
            <person name="Yachandra V.K."/>
        </authorList>
    </citation>
    <scope>X-RAY CRYSTALLOGRAPHY (4.50 ANGSTROMS) IN PHOTOSYSTEM II</scope>
    <scope>FUNCTION</scope>
    <scope>COFACTOR</scope>
    <scope>SUBUNIT</scope>
    <scope>SUBCELLULAR LOCATION</scope>
    <source>
        <strain>NIES-2133 / IAM M-273 / BP-1</strain>
    </source>
</reference>
<sequence length="163" mass="18027">MLKKCVWLAVALCLCLWQFTMGTALAAELTPEVLTVPLNSEGKTITLTEKQYLEGKRLFQYACASCHVGGITKTNPSLDLRTETLALATPPRDNIEGLVDYMKNPTTYDGEQEIAEVHPSLRSADIFPKMRNLTEKDLVAIAGHILVEPKILGDKWGGGKVYY</sequence>
<proteinExistence type="evidence at protein level"/>
<comment type="function">
    <text evidence="1 2 8 9 12">One of the extrinsic, lumenal subunits of photosystem II (PSII). PSII is a light-driven water plastoquinone oxidoreductase, using light energy to abstract electrons from H(2)O, generating a proton gradient subsequently used for ATP formation. The extrinsic proteins stabilize the structure of photosystem II oxygen-evolving complex (OEC), the ion environment of oxygen evolution and protect the OEC against heat-induced inactivation. Low-potential cytochrome c that plays a role in the OEC of PSII.</text>
</comment>
<comment type="cofactor">
    <cofactor>
        <name>heme c</name>
        <dbReference type="ChEBI" id="CHEBI:61717"/>
    </cofactor>
    <text evidence="1 3 4 5 6 7 8 9 10 11 12 13 14">Binds 1 heme c group covalently per subunit. PSII binds multiple chlorophylls, carotenoids and specific lipids.</text>
</comment>
<comment type="subunit">
    <text evidence="1 3 4 5 7 8 10 11 12 13 14">PSII is composed of 1 copy each of membrane proteins PsbA, PsbB, PsbC, PsbD, PsbE, PsbF, PsbH, PsbI, PsbJ, PsbK, PsbL, PsbM, PsbT, PsbX, PsbY, PsbZ, Psb30/Ycf12, peripheral proteins PsbO, CyanoQ (PsbQ), PsbU, PsbV and a large number of cofactors. It forms dimeric complexes.</text>
</comment>
<comment type="subcellular location">
    <subcellularLocation>
        <location evidence="1 3 4 5 6 7 8 9 10 11 12 13 14">Cellular thylakoid membrane</location>
        <topology evidence="1 3 4 5 6 7 8 9 10 11 12 13 14">Peripheral membrane protein</topology>
        <orientation evidence="1 4 5 6 7 8 9 10 11 12 13 14">Lumenal side</orientation>
    </subcellularLocation>
    <text>Associated with photosystem II at the lumenal side of the thylakoid membrane.</text>
</comment>
<comment type="mass spectrometry" mass="15752.0" error="11.0" method="MALDI" evidence="7">
    <text>Mass includes covalently attached heme group.</text>
</comment>
<comment type="mass spectrometry" mass="15743.0" method="MALDI" evidence="8">
    <text>Mass includes covalently attached heme group.</text>
</comment>
<comment type="disruption phenotype">
    <text evidence="2">Cells do not grow photoautotrophically under low CO(2) concentrations.</text>
</comment>
<comment type="similarity">
    <text evidence="1">Belongs to the cytochrome c family. PsbV subfamily.</text>
</comment>
<dbReference type="EMBL" id="AB052597">
    <property type="protein sequence ID" value="BAB20059.1"/>
    <property type="molecule type" value="Genomic_DNA"/>
</dbReference>
<dbReference type="EMBL" id="BA000039">
    <property type="protein sequence ID" value="BAC08837.1"/>
    <property type="molecule type" value="Genomic_DNA"/>
</dbReference>
<dbReference type="RefSeq" id="NP_682075.1">
    <property type="nucleotide sequence ID" value="NC_004113.1"/>
</dbReference>
<dbReference type="RefSeq" id="WP_011057125.1">
    <property type="nucleotide sequence ID" value="NC_004113.1"/>
</dbReference>
<dbReference type="PDB" id="1MZ4">
    <property type="method" value="X-ray"/>
    <property type="resolution" value="1.80 A"/>
    <property type="chains" value="A=27-163"/>
</dbReference>
<dbReference type="PDB" id="1S5L">
    <property type="method" value="X-ray"/>
    <property type="resolution" value="3.50 A"/>
    <property type="chains" value="V/v=27-163"/>
</dbReference>
<dbReference type="PDB" id="1W5C">
    <property type="method" value="X-ray"/>
    <property type="resolution" value="3.20 A"/>
    <property type="chains" value="T/V=1-163"/>
</dbReference>
<dbReference type="PDB" id="2AXT">
    <property type="method" value="X-ray"/>
    <property type="resolution" value="3.00 A"/>
    <property type="chains" value="V/v=27-163"/>
</dbReference>
<dbReference type="PDB" id="3KZI">
    <property type="method" value="X-ray"/>
    <property type="resolution" value="3.60 A"/>
    <property type="chains" value="V=27-163"/>
</dbReference>
<dbReference type="PDB" id="4FBY">
    <property type="method" value="X-ray"/>
    <property type="resolution" value="6.56 A"/>
    <property type="chains" value="V/i=27-163"/>
</dbReference>
<dbReference type="PDB" id="4IXQ">
    <property type="method" value="X-ray"/>
    <property type="resolution" value="5.70 A"/>
    <property type="chains" value="V/v=1-163"/>
</dbReference>
<dbReference type="PDB" id="4IXR">
    <property type="method" value="X-ray"/>
    <property type="resolution" value="5.90 A"/>
    <property type="chains" value="V/v=1-163"/>
</dbReference>
<dbReference type="PDB" id="4PBU">
    <property type="method" value="X-ray"/>
    <property type="resolution" value="5.00 A"/>
    <property type="chains" value="V/v=27-163"/>
</dbReference>
<dbReference type="PDB" id="4PJ0">
    <property type="method" value="X-ray"/>
    <property type="resolution" value="2.44 A"/>
    <property type="chains" value="V/v=1-163"/>
</dbReference>
<dbReference type="PDB" id="4RVY">
    <property type="method" value="X-ray"/>
    <property type="resolution" value="5.50 A"/>
    <property type="chains" value="V/v=27-163"/>
</dbReference>
<dbReference type="PDB" id="4TNH">
    <property type="method" value="X-ray"/>
    <property type="resolution" value="4.90 A"/>
    <property type="chains" value="V/v=1-163"/>
</dbReference>
<dbReference type="PDB" id="4TNI">
    <property type="method" value="X-ray"/>
    <property type="resolution" value="4.60 A"/>
    <property type="chains" value="V/v=1-163"/>
</dbReference>
<dbReference type="PDB" id="4TNJ">
    <property type="method" value="X-ray"/>
    <property type="resolution" value="4.50 A"/>
    <property type="chains" value="V/v=1-163"/>
</dbReference>
<dbReference type="PDB" id="4TNK">
    <property type="method" value="X-ray"/>
    <property type="resolution" value="5.20 A"/>
    <property type="chains" value="V/v=1-163"/>
</dbReference>
<dbReference type="PDB" id="4V62">
    <property type="method" value="X-ray"/>
    <property type="resolution" value="2.90 A"/>
    <property type="chains" value="AV/BV=27-163"/>
</dbReference>
<dbReference type="PDB" id="4V82">
    <property type="method" value="X-ray"/>
    <property type="resolution" value="3.20 A"/>
    <property type="chains" value="AV/BV=27-163"/>
</dbReference>
<dbReference type="PDB" id="5E79">
    <property type="method" value="X-ray"/>
    <property type="resolution" value="3.50 A"/>
    <property type="chains" value="V/v=27-163"/>
</dbReference>
<dbReference type="PDB" id="5E7C">
    <property type="method" value="X-ray"/>
    <property type="resolution" value="4.50 A"/>
    <property type="chains" value="V/v=27-163"/>
</dbReference>
<dbReference type="PDB" id="5H2F">
    <property type="method" value="X-ray"/>
    <property type="resolution" value="2.20 A"/>
    <property type="chains" value="V/v=27-163"/>
</dbReference>
<dbReference type="PDB" id="5KAF">
    <property type="method" value="X-ray"/>
    <property type="resolution" value="3.00 A"/>
    <property type="chains" value="V/v=1-163"/>
</dbReference>
<dbReference type="PDB" id="5KAI">
    <property type="method" value="X-ray"/>
    <property type="resolution" value="2.80 A"/>
    <property type="chains" value="V/v=1-163"/>
</dbReference>
<dbReference type="PDB" id="5MX2">
    <property type="method" value="X-ray"/>
    <property type="resolution" value="2.20 A"/>
    <property type="chains" value="V/v=1-163"/>
</dbReference>
<dbReference type="PDB" id="5TIS">
    <property type="method" value="X-ray"/>
    <property type="resolution" value="2.25 A"/>
    <property type="chains" value="V/v=1-163"/>
</dbReference>
<dbReference type="PDB" id="5ZZN">
    <property type="method" value="X-ray"/>
    <property type="resolution" value="2.10 A"/>
    <property type="chains" value="V/v=27-163"/>
</dbReference>
<dbReference type="PDB" id="6DHE">
    <property type="method" value="X-ray"/>
    <property type="resolution" value="2.05 A"/>
    <property type="chains" value="V/v=27-163"/>
</dbReference>
<dbReference type="PDB" id="6DHF">
    <property type="method" value="X-ray"/>
    <property type="resolution" value="2.08 A"/>
    <property type="chains" value="V/v=27-163"/>
</dbReference>
<dbReference type="PDB" id="6DHG">
    <property type="method" value="X-ray"/>
    <property type="resolution" value="2.50 A"/>
    <property type="chains" value="V/v=27-163"/>
</dbReference>
<dbReference type="PDB" id="6DHH">
    <property type="method" value="X-ray"/>
    <property type="resolution" value="2.20 A"/>
    <property type="chains" value="V/v=27-163"/>
</dbReference>
<dbReference type="PDB" id="6DHO">
    <property type="method" value="X-ray"/>
    <property type="resolution" value="2.07 A"/>
    <property type="chains" value="V/v=27-163"/>
</dbReference>
<dbReference type="PDB" id="6DHP">
    <property type="method" value="X-ray"/>
    <property type="resolution" value="2.04 A"/>
    <property type="chains" value="V/v=27-163"/>
</dbReference>
<dbReference type="PDB" id="6W1O">
    <property type="method" value="X-ray"/>
    <property type="resolution" value="2.08 A"/>
    <property type="chains" value="V/v=1-163"/>
</dbReference>
<dbReference type="PDB" id="6W1P">
    <property type="method" value="X-ray"/>
    <property type="resolution" value="2.26 A"/>
    <property type="chains" value="V/v=1-163"/>
</dbReference>
<dbReference type="PDB" id="6W1Q">
    <property type="method" value="X-ray"/>
    <property type="resolution" value="2.27 A"/>
    <property type="chains" value="V/v=1-163"/>
</dbReference>
<dbReference type="PDB" id="6W1R">
    <property type="method" value="X-ray"/>
    <property type="resolution" value="2.23 A"/>
    <property type="chains" value="V/v=1-163"/>
</dbReference>
<dbReference type="PDB" id="6W1T">
    <property type="method" value="X-ray"/>
    <property type="resolution" value="2.01 A"/>
    <property type="chains" value="V/v=1-163"/>
</dbReference>
<dbReference type="PDB" id="6W1U">
    <property type="method" value="X-ray"/>
    <property type="resolution" value="2.09 A"/>
    <property type="chains" value="V/v=1-163"/>
</dbReference>
<dbReference type="PDB" id="6W1V">
    <property type="method" value="X-ray"/>
    <property type="resolution" value="2.09 A"/>
    <property type="chains" value="V/v=1-163"/>
</dbReference>
<dbReference type="PDB" id="7RF1">
    <property type="method" value="X-ray"/>
    <property type="resolution" value="1.89 A"/>
    <property type="chains" value="V/v=1-163"/>
</dbReference>
<dbReference type="PDB" id="7RF2">
    <property type="method" value="X-ray"/>
    <property type="resolution" value="2.08 A"/>
    <property type="chains" value="V/v=1-163"/>
</dbReference>
<dbReference type="PDB" id="7RF3">
    <property type="method" value="X-ray"/>
    <property type="resolution" value="2.26 A"/>
    <property type="chains" value="V/v=1-163"/>
</dbReference>
<dbReference type="PDB" id="7RF4">
    <property type="method" value="X-ray"/>
    <property type="resolution" value="2.27 A"/>
    <property type="chains" value="V/v=1-163"/>
</dbReference>
<dbReference type="PDB" id="7RF5">
    <property type="method" value="X-ray"/>
    <property type="resolution" value="2.23 A"/>
    <property type="chains" value="V/v=1-163"/>
</dbReference>
<dbReference type="PDB" id="7RF6">
    <property type="method" value="X-ray"/>
    <property type="resolution" value="2.01 A"/>
    <property type="chains" value="V/v=1-163"/>
</dbReference>
<dbReference type="PDB" id="7RF7">
    <property type="method" value="X-ray"/>
    <property type="resolution" value="2.09 A"/>
    <property type="chains" value="V/v=1-163"/>
</dbReference>
<dbReference type="PDB" id="7RF8">
    <property type="method" value="X-ray"/>
    <property type="resolution" value="2.09 A"/>
    <property type="chains" value="V/v=1-163"/>
</dbReference>
<dbReference type="PDB" id="7YQ2">
    <property type="method" value="X-ray"/>
    <property type="resolution" value="1.90 A"/>
    <property type="chains" value="V/v=1-163"/>
</dbReference>
<dbReference type="PDB" id="7YQ7">
    <property type="method" value="X-ray"/>
    <property type="resolution" value="1.90 A"/>
    <property type="chains" value="V/v=1-163"/>
</dbReference>
<dbReference type="PDB" id="8EZ5">
    <property type="method" value="X-ray"/>
    <property type="resolution" value="2.09 A"/>
    <property type="chains" value="V/v=1-163"/>
</dbReference>
<dbReference type="PDB" id="8F4C">
    <property type="method" value="X-ray"/>
    <property type="resolution" value="2.00 A"/>
    <property type="chains" value="V/v=1-163"/>
</dbReference>
<dbReference type="PDB" id="8F4D">
    <property type="method" value="X-ray"/>
    <property type="resolution" value="2.15 A"/>
    <property type="chains" value="V/v=1-163"/>
</dbReference>
<dbReference type="PDB" id="8F4E">
    <property type="method" value="X-ray"/>
    <property type="resolution" value="2.09 A"/>
    <property type="chains" value="V/v=1-163"/>
</dbReference>
<dbReference type="PDB" id="8F4F">
    <property type="method" value="X-ray"/>
    <property type="resolution" value="2.03 A"/>
    <property type="chains" value="V/v=1-163"/>
</dbReference>
<dbReference type="PDB" id="8F4G">
    <property type="method" value="X-ray"/>
    <property type="resolution" value="2.03 A"/>
    <property type="chains" value="V/v=1-163"/>
</dbReference>
<dbReference type="PDB" id="8F4H">
    <property type="method" value="X-ray"/>
    <property type="resolution" value="2.10 A"/>
    <property type="chains" value="V/v=1-163"/>
</dbReference>
<dbReference type="PDB" id="8F4I">
    <property type="method" value="X-ray"/>
    <property type="resolution" value="2.00 A"/>
    <property type="chains" value="V/v=1-163"/>
</dbReference>
<dbReference type="PDB" id="8F4J">
    <property type="method" value="X-ray"/>
    <property type="resolution" value="2.00 A"/>
    <property type="chains" value="V/v=1-163"/>
</dbReference>
<dbReference type="PDB" id="8F4K">
    <property type="method" value="X-ray"/>
    <property type="resolution" value="2.16 A"/>
    <property type="chains" value="V/v=1-163"/>
</dbReference>
<dbReference type="PDB" id="9EVX">
    <property type="method" value="EM"/>
    <property type="resolution" value="1.71 A"/>
    <property type="chains" value="V/v=1-163"/>
</dbReference>
<dbReference type="PDBsum" id="1MZ4"/>
<dbReference type="PDBsum" id="1S5L"/>
<dbReference type="PDBsum" id="1W5C"/>
<dbReference type="PDBsum" id="2AXT"/>
<dbReference type="PDBsum" id="3KZI"/>
<dbReference type="PDBsum" id="4FBY"/>
<dbReference type="PDBsum" id="4IXQ"/>
<dbReference type="PDBsum" id="4IXR"/>
<dbReference type="PDBsum" id="4PBU"/>
<dbReference type="PDBsum" id="4PJ0"/>
<dbReference type="PDBsum" id="4RVY"/>
<dbReference type="PDBsum" id="4TNH"/>
<dbReference type="PDBsum" id="4TNI"/>
<dbReference type="PDBsum" id="4TNJ"/>
<dbReference type="PDBsum" id="4TNK"/>
<dbReference type="PDBsum" id="4V62"/>
<dbReference type="PDBsum" id="4V82"/>
<dbReference type="PDBsum" id="5E79"/>
<dbReference type="PDBsum" id="5E7C"/>
<dbReference type="PDBsum" id="5H2F"/>
<dbReference type="PDBsum" id="5KAF"/>
<dbReference type="PDBsum" id="5KAI"/>
<dbReference type="PDBsum" id="5MX2"/>
<dbReference type="PDBsum" id="5TIS"/>
<dbReference type="PDBsum" id="5ZZN"/>
<dbReference type="PDBsum" id="6DHE"/>
<dbReference type="PDBsum" id="6DHF"/>
<dbReference type="PDBsum" id="6DHG"/>
<dbReference type="PDBsum" id="6DHH"/>
<dbReference type="PDBsum" id="6DHO"/>
<dbReference type="PDBsum" id="6DHP"/>
<dbReference type="PDBsum" id="6W1O"/>
<dbReference type="PDBsum" id="6W1P"/>
<dbReference type="PDBsum" id="6W1Q"/>
<dbReference type="PDBsum" id="6W1R"/>
<dbReference type="PDBsum" id="6W1T"/>
<dbReference type="PDBsum" id="6W1U"/>
<dbReference type="PDBsum" id="6W1V"/>
<dbReference type="PDBsum" id="7RF1"/>
<dbReference type="PDBsum" id="7RF2"/>
<dbReference type="PDBsum" id="7RF3"/>
<dbReference type="PDBsum" id="7RF4"/>
<dbReference type="PDBsum" id="7RF5"/>
<dbReference type="PDBsum" id="7RF6"/>
<dbReference type="PDBsum" id="7RF7"/>
<dbReference type="PDBsum" id="7RF8"/>
<dbReference type="PDBsum" id="7YQ2"/>
<dbReference type="PDBsum" id="7YQ7"/>
<dbReference type="PDBsum" id="8EZ5"/>
<dbReference type="PDBsum" id="8F4C"/>
<dbReference type="PDBsum" id="8F4D"/>
<dbReference type="PDBsum" id="8F4E"/>
<dbReference type="PDBsum" id="8F4F"/>
<dbReference type="PDBsum" id="8F4G"/>
<dbReference type="PDBsum" id="8F4H"/>
<dbReference type="PDBsum" id="8F4I"/>
<dbReference type="PDBsum" id="8F4J"/>
<dbReference type="PDBsum" id="8F4K"/>
<dbReference type="PDBsum" id="9EVX"/>
<dbReference type="EMDB" id="EMD-50019"/>
<dbReference type="SMR" id="P0A386"/>
<dbReference type="DIP" id="DIP-48502N"/>
<dbReference type="IntAct" id="P0A386">
    <property type="interactions" value="19"/>
</dbReference>
<dbReference type="STRING" id="197221.gene:10747881"/>
<dbReference type="EnsemblBacteria" id="BAC08837">
    <property type="protein sequence ID" value="BAC08837"/>
    <property type="gene ID" value="BAC08837"/>
</dbReference>
<dbReference type="KEGG" id="tel:tll1285"/>
<dbReference type="PATRIC" id="fig|197221.4.peg.1352"/>
<dbReference type="eggNOG" id="COG2010">
    <property type="taxonomic scope" value="Bacteria"/>
</dbReference>
<dbReference type="EvolutionaryTrace" id="P0A386"/>
<dbReference type="Proteomes" id="UP000000440">
    <property type="component" value="Chromosome"/>
</dbReference>
<dbReference type="GO" id="GO:0009523">
    <property type="term" value="C:photosystem II"/>
    <property type="evidence" value="ECO:0007669"/>
    <property type="project" value="UniProtKB-KW"/>
</dbReference>
<dbReference type="GO" id="GO:0031676">
    <property type="term" value="C:plasma membrane-derived thylakoid membrane"/>
    <property type="evidence" value="ECO:0007669"/>
    <property type="project" value="UniProtKB-SubCell"/>
</dbReference>
<dbReference type="GO" id="GO:0009055">
    <property type="term" value="F:electron transfer activity"/>
    <property type="evidence" value="ECO:0007669"/>
    <property type="project" value="InterPro"/>
</dbReference>
<dbReference type="GO" id="GO:0020037">
    <property type="term" value="F:heme binding"/>
    <property type="evidence" value="ECO:0007669"/>
    <property type="project" value="InterPro"/>
</dbReference>
<dbReference type="GO" id="GO:0005506">
    <property type="term" value="F:iron ion binding"/>
    <property type="evidence" value="ECO:0007669"/>
    <property type="project" value="InterPro"/>
</dbReference>
<dbReference type="GO" id="GO:0019684">
    <property type="term" value="P:photosynthesis, light reaction"/>
    <property type="evidence" value="ECO:0007669"/>
    <property type="project" value="UniProtKB-UniRule"/>
</dbReference>
<dbReference type="GO" id="GO:0022904">
    <property type="term" value="P:respiratory electron transport chain"/>
    <property type="evidence" value="ECO:0007669"/>
    <property type="project" value="InterPro"/>
</dbReference>
<dbReference type="Gene3D" id="1.10.760.10">
    <property type="entry name" value="Cytochrome c-like domain"/>
    <property type="match status" value="1"/>
</dbReference>
<dbReference type="HAMAP" id="MF_01378">
    <property type="entry name" value="PSII_Cyt550"/>
    <property type="match status" value="1"/>
</dbReference>
<dbReference type="InterPro" id="IPR009056">
    <property type="entry name" value="Cyt_c-like_dom"/>
</dbReference>
<dbReference type="InterPro" id="IPR036909">
    <property type="entry name" value="Cyt_c-like_dom_sf"/>
</dbReference>
<dbReference type="InterPro" id="IPR029490">
    <property type="entry name" value="Cytochrom_C550"/>
</dbReference>
<dbReference type="InterPro" id="IPR017851">
    <property type="entry name" value="PsbV_cyt_c550"/>
</dbReference>
<dbReference type="InterPro" id="IPR016003">
    <property type="entry name" value="PsbV_cyt_c550-like"/>
</dbReference>
<dbReference type="NCBIfam" id="TIGR03045">
    <property type="entry name" value="PS_II_C550"/>
    <property type="match status" value="1"/>
</dbReference>
<dbReference type="Pfam" id="PF14495">
    <property type="entry name" value="Cytochrom_C550"/>
    <property type="match status" value="1"/>
</dbReference>
<dbReference type="PIRSF" id="PIRSF005890">
    <property type="entry name" value="Phot_II_cyt_c550"/>
    <property type="match status" value="1"/>
</dbReference>
<dbReference type="SUPFAM" id="SSF46626">
    <property type="entry name" value="Cytochrome c"/>
    <property type="match status" value="1"/>
</dbReference>
<dbReference type="PROSITE" id="PS51007">
    <property type="entry name" value="CYTC"/>
    <property type="match status" value="1"/>
</dbReference>
<protein>
    <recommendedName>
        <fullName evidence="1">Photosystem II extrinsic protein V</fullName>
        <shortName evidence="1 16">PsbV</shortName>
    </recommendedName>
    <alternativeName>
        <fullName>Cytochrome c-549</fullName>
    </alternativeName>
    <alternativeName>
        <fullName evidence="1 15">Cytochrome c-550</fullName>
    </alternativeName>
    <alternativeName>
        <fullName evidence="1">Cytochrome c550</fullName>
    </alternativeName>
    <alternativeName>
        <fullName evidence="1">Low-potential cytochrome c</fullName>
    </alternativeName>
</protein>
<feature type="signal peptide" evidence="1 6 7 8">
    <location>
        <begin position="1"/>
        <end position="26"/>
    </location>
</feature>
<feature type="chain" id="PRO_0000006518" description="Photosystem II extrinsic protein V">
    <location>
        <begin position="27"/>
        <end position="163"/>
    </location>
</feature>
<feature type="binding site" description="axial binding residue" evidence="3 5 7 16 17 18 19 20">
    <location>
        <position position="67"/>
    </location>
    <ligand>
        <name>heme c</name>
        <dbReference type="ChEBI" id="CHEBI:61717"/>
    </ligand>
    <ligandPart>
        <name>Fe</name>
        <dbReference type="ChEBI" id="CHEBI:18248"/>
    </ligandPart>
</feature>
<feature type="binding site" description="axial binding residue" evidence="3 5 7 16 17 18 19 20">
    <location>
        <position position="118"/>
    </location>
    <ligand>
        <name>heme c</name>
        <dbReference type="ChEBI" id="CHEBI:61717"/>
    </ligand>
    <ligandPart>
        <name>Fe</name>
        <dbReference type="ChEBI" id="CHEBI:18248"/>
    </ligandPart>
</feature>
<feature type="helix" evidence="21">
    <location>
        <begin position="31"/>
        <end position="34"/>
    </location>
</feature>
<feature type="strand" evidence="21">
    <location>
        <begin position="35"/>
        <end position="39"/>
    </location>
</feature>
<feature type="strand" evidence="21">
    <location>
        <begin position="44"/>
        <end position="46"/>
    </location>
</feature>
<feature type="helix" evidence="21">
    <location>
        <begin position="49"/>
        <end position="62"/>
    </location>
</feature>
<feature type="helix" evidence="21">
    <location>
        <begin position="64"/>
        <end position="67"/>
    </location>
</feature>
<feature type="helix" evidence="21">
    <location>
        <begin position="68"/>
        <end position="70"/>
    </location>
</feature>
<feature type="strand" evidence="22">
    <location>
        <begin position="73"/>
        <end position="75"/>
    </location>
</feature>
<feature type="helix" evidence="21">
    <location>
        <begin position="76"/>
        <end position="78"/>
    </location>
</feature>
<feature type="helix" evidence="21">
    <location>
        <begin position="82"/>
        <end position="86"/>
    </location>
</feature>
<feature type="strand" evidence="21">
    <location>
        <begin position="88"/>
        <end position="90"/>
    </location>
</feature>
<feature type="helix" evidence="21">
    <location>
        <begin position="95"/>
        <end position="103"/>
    </location>
</feature>
<feature type="strand" evidence="21">
    <location>
        <begin position="110"/>
        <end position="113"/>
    </location>
</feature>
<feature type="turn" evidence="21">
    <location>
        <begin position="115"/>
        <end position="117"/>
    </location>
</feature>
<feature type="helix" evidence="21">
    <location>
        <begin position="121"/>
        <end position="123"/>
    </location>
</feature>
<feature type="turn" evidence="21">
    <location>
        <begin position="124"/>
        <end position="126"/>
    </location>
</feature>
<feature type="helix" evidence="21">
    <location>
        <begin position="128"/>
        <end position="130"/>
    </location>
</feature>
<feature type="helix" evidence="21">
    <location>
        <begin position="135"/>
        <end position="152"/>
    </location>
</feature>
<feature type="helix" evidence="21">
    <location>
        <begin position="153"/>
        <end position="155"/>
    </location>
</feature>
<feature type="turn" evidence="23">
    <location>
        <begin position="156"/>
        <end position="158"/>
    </location>
</feature>
<feature type="helix" evidence="23">
    <location>
        <begin position="160"/>
        <end position="162"/>
    </location>
</feature>